<name>FRIH_CANLF</name>
<accession>Q95MP7</accession>
<accession>Q53VC0</accession>
<evidence type="ECO:0000250" key="1">
    <source>
        <dbReference type="UniProtKB" id="P02794"/>
    </source>
</evidence>
<evidence type="ECO:0000250" key="2">
    <source>
        <dbReference type="UniProtKB" id="P09528"/>
    </source>
</evidence>
<evidence type="ECO:0000250" key="3">
    <source>
        <dbReference type="UniProtKB" id="P19130"/>
    </source>
</evidence>
<evidence type="ECO:0000255" key="4">
    <source>
        <dbReference type="PROSITE-ProRule" id="PRU00085"/>
    </source>
</evidence>
<evidence type="ECO:0000305" key="5"/>
<sequence length="183" mass="21308">MTTASPSQVRQNYHQDSEAAINRQINLELYASYVYLSMSYYFDRDDVALKNFAKYFLHQSHEEREHAEKLMKLQNQRGGRIFLQDIKKPDRDDWENGLNAMECALHLEKSVNQSLLELHKLATDKNDPHLCDFIETHYLNEQVKSIKELGDHVTNLRKMGAPESGMAEYLFDKHTLGNSDNES</sequence>
<protein>
    <recommendedName>
        <fullName>Ferritin heavy chain</fullName>
        <shortName>Ferritin H subunit</shortName>
        <ecNumber evidence="1">1.16.3.1</ecNumber>
    </recommendedName>
    <component>
        <recommendedName>
            <fullName>Ferritin heavy chain, N-terminally processed</fullName>
        </recommendedName>
    </component>
</protein>
<proteinExistence type="evidence at transcript level"/>
<feature type="chain" id="PRO_0000424469" description="Ferritin heavy chain">
    <location>
        <begin position="1"/>
        <end position="183"/>
    </location>
</feature>
<feature type="initiator methionine" description="Removed; alternate" evidence="1">
    <location>
        <position position="1"/>
    </location>
</feature>
<feature type="chain" id="PRO_0000201046" description="Ferritin heavy chain, N-terminally processed">
    <location>
        <begin position="2"/>
        <end position="183"/>
    </location>
</feature>
<feature type="domain" description="Ferritin-like diiron" evidence="4">
    <location>
        <begin position="11"/>
        <end position="160"/>
    </location>
</feature>
<feature type="binding site" evidence="4">
    <location>
        <position position="28"/>
    </location>
    <ligand>
        <name>Fe cation</name>
        <dbReference type="ChEBI" id="CHEBI:24875"/>
        <label>1</label>
    </ligand>
</feature>
<feature type="binding site" evidence="4">
    <location>
        <position position="63"/>
    </location>
    <ligand>
        <name>Fe cation</name>
        <dbReference type="ChEBI" id="CHEBI:24875"/>
        <label>1</label>
    </ligand>
</feature>
<feature type="binding site" evidence="4">
    <location>
        <position position="63"/>
    </location>
    <ligand>
        <name>Fe cation</name>
        <dbReference type="ChEBI" id="CHEBI:24875"/>
        <label>2</label>
    </ligand>
</feature>
<feature type="binding site" evidence="4">
    <location>
        <position position="66"/>
    </location>
    <ligand>
        <name>Fe cation</name>
        <dbReference type="ChEBI" id="CHEBI:24875"/>
        <label>1</label>
    </ligand>
</feature>
<feature type="binding site" evidence="4">
    <location>
        <position position="108"/>
    </location>
    <ligand>
        <name>Fe cation</name>
        <dbReference type="ChEBI" id="CHEBI:24875"/>
        <label>2</label>
    </ligand>
</feature>
<feature type="binding site" evidence="4">
    <location>
        <position position="142"/>
    </location>
    <ligand>
        <name>Fe cation</name>
        <dbReference type="ChEBI" id="CHEBI:24875"/>
        <label>2</label>
    </ligand>
</feature>
<feature type="modified residue" description="N-acetylmethionine" evidence="1">
    <location>
        <position position="1"/>
    </location>
</feature>
<feature type="modified residue" description="N-acetylthreonine; in Ferritin heavy chain, N-terminally processed" evidence="1">
    <location>
        <position position="2"/>
    </location>
</feature>
<feature type="modified residue" description="Phosphoserine" evidence="1">
    <location>
        <position position="179"/>
    </location>
</feature>
<feature type="modified residue" description="Phosphoserine" evidence="1">
    <location>
        <position position="183"/>
    </location>
</feature>
<dbReference type="EC" id="1.16.3.1" evidence="1"/>
<dbReference type="EMBL" id="AF285177">
    <property type="protein sequence ID" value="AAK82992.1"/>
    <property type="molecule type" value="mRNA"/>
</dbReference>
<dbReference type="EMBL" id="AB175610">
    <property type="protein sequence ID" value="BAD96175.1"/>
    <property type="molecule type" value="mRNA"/>
</dbReference>
<dbReference type="EMBL" id="AB175611">
    <property type="protein sequence ID" value="BAD96176.1"/>
    <property type="molecule type" value="mRNA"/>
</dbReference>
<dbReference type="RefSeq" id="NP_001003080.1">
    <property type="nucleotide sequence ID" value="NM_001003080.2"/>
</dbReference>
<dbReference type="RefSeq" id="NP_001180585.1">
    <property type="nucleotide sequence ID" value="NM_001193656.1"/>
</dbReference>
<dbReference type="SMR" id="Q95MP7"/>
<dbReference type="FunCoup" id="Q95MP7">
    <property type="interactions" value="131"/>
</dbReference>
<dbReference type="STRING" id="9615.ENSCAFP00000023396"/>
<dbReference type="PaxDb" id="9612-ENSCAFP00000023396"/>
<dbReference type="Ensembl" id="ENSCAFT00030008420.1">
    <property type="protein sequence ID" value="ENSCAFP00030007395.1"/>
    <property type="gene ID" value="ENSCAFG00030004568.1"/>
</dbReference>
<dbReference type="Ensembl" id="ENSCAFT00040038564.1">
    <property type="protein sequence ID" value="ENSCAFP00040033637.1"/>
    <property type="gene ID" value="ENSCAFG00040020799.1"/>
</dbReference>
<dbReference type="GeneID" id="100499480"/>
<dbReference type="GeneID" id="403631"/>
<dbReference type="KEGG" id="cfa:403631"/>
<dbReference type="CTD" id="2495"/>
<dbReference type="eggNOG" id="KOG2332">
    <property type="taxonomic scope" value="Eukaryota"/>
</dbReference>
<dbReference type="HOGENOM" id="CLU_065681_4_0_1"/>
<dbReference type="InParanoid" id="Q95MP7"/>
<dbReference type="OMA" id="FFLKASM"/>
<dbReference type="OrthoDB" id="9610667at2759"/>
<dbReference type="TreeFam" id="TF313885"/>
<dbReference type="Reactome" id="R-CFA-432722">
    <property type="pathway name" value="Golgi Associated Vesicle Biogenesis"/>
</dbReference>
<dbReference type="Reactome" id="R-CFA-6798695">
    <property type="pathway name" value="Neutrophil degranulation"/>
</dbReference>
<dbReference type="Reactome" id="R-CFA-917937">
    <property type="pathway name" value="Iron uptake and transport"/>
</dbReference>
<dbReference type="Proteomes" id="UP000002254">
    <property type="component" value="Unplaced"/>
</dbReference>
<dbReference type="Proteomes" id="UP000694429">
    <property type="component" value="Chromosome 18"/>
</dbReference>
<dbReference type="Proteomes" id="UP000694542">
    <property type="component" value="Chromosome 18"/>
</dbReference>
<dbReference type="Proteomes" id="UP000805418">
    <property type="component" value="Unplaced"/>
</dbReference>
<dbReference type="Bgee" id="ENSCAFG00000015901">
    <property type="expression patterns" value="Expressed in granulocyte and 47 other cell types or tissues"/>
</dbReference>
<dbReference type="GO" id="GO:0005776">
    <property type="term" value="C:autophagosome"/>
    <property type="evidence" value="ECO:0007669"/>
    <property type="project" value="UniProtKB-SubCell"/>
</dbReference>
<dbReference type="GO" id="GO:0005737">
    <property type="term" value="C:cytoplasm"/>
    <property type="evidence" value="ECO:0000318"/>
    <property type="project" value="GO_Central"/>
</dbReference>
<dbReference type="GO" id="GO:0031410">
    <property type="term" value="C:cytoplasmic vesicle"/>
    <property type="evidence" value="ECO:0007669"/>
    <property type="project" value="UniProtKB-KW"/>
</dbReference>
<dbReference type="GO" id="GO:0005764">
    <property type="term" value="C:lysosome"/>
    <property type="evidence" value="ECO:0007669"/>
    <property type="project" value="UniProtKB-SubCell"/>
</dbReference>
<dbReference type="GO" id="GO:0008199">
    <property type="term" value="F:ferric iron binding"/>
    <property type="evidence" value="ECO:0000318"/>
    <property type="project" value="GO_Central"/>
</dbReference>
<dbReference type="GO" id="GO:0008198">
    <property type="term" value="F:ferrous iron binding"/>
    <property type="evidence" value="ECO:0000318"/>
    <property type="project" value="GO_Central"/>
</dbReference>
<dbReference type="GO" id="GO:0004322">
    <property type="term" value="F:ferroxidase activity"/>
    <property type="evidence" value="ECO:0007669"/>
    <property type="project" value="UniProtKB-EC"/>
</dbReference>
<dbReference type="GO" id="GO:0006955">
    <property type="term" value="P:immune response"/>
    <property type="evidence" value="ECO:0000250"/>
    <property type="project" value="UniProtKB"/>
</dbReference>
<dbReference type="GO" id="GO:0006879">
    <property type="term" value="P:intracellular iron ion homeostasis"/>
    <property type="evidence" value="ECO:0007669"/>
    <property type="project" value="UniProtKB-KW"/>
</dbReference>
<dbReference type="GO" id="GO:0006826">
    <property type="term" value="P:iron ion transport"/>
    <property type="evidence" value="ECO:0000318"/>
    <property type="project" value="GO_Central"/>
</dbReference>
<dbReference type="GO" id="GO:0008285">
    <property type="term" value="P:negative regulation of cell population proliferation"/>
    <property type="evidence" value="ECO:0000250"/>
    <property type="project" value="UniProtKB"/>
</dbReference>
<dbReference type="GO" id="GO:0110076">
    <property type="term" value="P:negative regulation of ferroptosis"/>
    <property type="evidence" value="ECO:0000250"/>
    <property type="project" value="UniProtKB"/>
</dbReference>
<dbReference type="CDD" id="cd01056">
    <property type="entry name" value="Euk_Ferritin"/>
    <property type="match status" value="1"/>
</dbReference>
<dbReference type="FunFam" id="1.20.1260.10:FF:000016">
    <property type="entry name" value="Ferritin heavy chain"/>
    <property type="match status" value="1"/>
</dbReference>
<dbReference type="Gene3D" id="1.20.1260.10">
    <property type="match status" value="1"/>
</dbReference>
<dbReference type="InterPro" id="IPR001519">
    <property type="entry name" value="Ferritin"/>
</dbReference>
<dbReference type="InterPro" id="IPR012347">
    <property type="entry name" value="Ferritin-like"/>
</dbReference>
<dbReference type="InterPro" id="IPR009040">
    <property type="entry name" value="Ferritin-like_diiron"/>
</dbReference>
<dbReference type="InterPro" id="IPR009078">
    <property type="entry name" value="Ferritin-like_SF"/>
</dbReference>
<dbReference type="InterPro" id="IPR014034">
    <property type="entry name" value="Ferritin_CS"/>
</dbReference>
<dbReference type="InterPro" id="IPR008331">
    <property type="entry name" value="Ferritin_DPS_dom"/>
</dbReference>
<dbReference type="PANTHER" id="PTHR11431">
    <property type="entry name" value="FERRITIN"/>
    <property type="match status" value="1"/>
</dbReference>
<dbReference type="PANTHER" id="PTHR11431:SF37">
    <property type="entry name" value="FERRITIN HEAVY CHAIN"/>
    <property type="match status" value="1"/>
</dbReference>
<dbReference type="Pfam" id="PF00210">
    <property type="entry name" value="Ferritin"/>
    <property type="match status" value="1"/>
</dbReference>
<dbReference type="SUPFAM" id="SSF47240">
    <property type="entry name" value="Ferritin-like"/>
    <property type="match status" value="1"/>
</dbReference>
<dbReference type="PROSITE" id="PS00540">
    <property type="entry name" value="FERRITIN_1"/>
    <property type="match status" value="1"/>
</dbReference>
<dbReference type="PROSITE" id="PS00204">
    <property type="entry name" value="FERRITIN_2"/>
    <property type="match status" value="1"/>
</dbReference>
<dbReference type="PROSITE" id="PS50905">
    <property type="entry name" value="FERRITIN_LIKE"/>
    <property type="match status" value="1"/>
</dbReference>
<reference key="1">
    <citation type="submission" date="2000-07" db="EMBL/GenBank/DDBJ databases">
        <authorList>
            <person name="Jeoung D."/>
            <person name="Jung D."/>
            <person name="Kim H."/>
        </authorList>
    </citation>
    <scope>NUCLEOTIDE SEQUENCE [MRNA]</scope>
</reference>
<reference key="2">
    <citation type="journal article" date="2005" name="DNA Seq.">
        <title>Sequence analysis of canine and equine ferritin H and L subunit cDNAs.</title>
        <authorList>
            <person name="Orino K."/>
            <person name="Miura T."/>
            <person name="Muto S."/>
            <person name="Watanabe K."/>
        </authorList>
    </citation>
    <scope>NUCLEOTIDE SEQUENCE [MRNA]</scope>
    <source>
        <tissue>Liver</tissue>
        <tissue>Spleen</tissue>
    </source>
</reference>
<keyword id="KW-0007">Acetylation</keyword>
<keyword id="KW-0963">Cytoplasm</keyword>
<keyword id="KW-0968">Cytoplasmic vesicle</keyword>
<keyword id="KW-0408">Iron</keyword>
<keyword id="KW-0409">Iron storage</keyword>
<keyword id="KW-0458">Lysosome</keyword>
<keyword id="KW-0479">Metal-binding</keyword>
<keyword id="KW-0560">Oxidoreductase</keyword>
<keyword id="KW-0597">Phosphoprotein</keyword>
<keyword id="KW-1185">Reference proteome</keyword>
<organism>
    <name type="scientific">Canis lupus familiaris</name>
    <name type="common">Dog</name>
    <name type="synonym">Canis familiaris</name>
    <dbReference type="NCBI Taxonomy" id="9615"/>
    <lineage>
        <taxon>Eukaryota</taxon>
        <taxon>Metazoa</taxon>
        <taxon>Chordata</taxon>
        <taxon>Craniata</taxon>
        <taxon>Vertebrata</taxon>
        <taxon>Euteleostomi</taxon>
        <taxon>Mammalia</taxon>
        <taxon>Eutheria</taxon>
        <taxon>Laurasiatheria</taxon>
        <taxon>Carnivora</taxon>
        <taxon>Caniformia</taxon>
        <taxon>Canidae</taxon>
        <taxon>Canis</taxon>
    </lineage>
</organism>
<gene>
    <name type="primary">FTH1</name>
    <name type="synonym">FTH</name>
</gene>
<comment type="function">
    <text evidence="1 2">Stores iron in a soluble, non-toxic, readily available form (By similarity). Important for iron homeostasis (By similarity). Has ferroxidase activity (By similarity). Iron is taken up in the ferrous form and deposited as ferric hydroxides after oxidation (By similarity). Also plays a role in delivery of iron to cells (By similarity). Mediates iron uptake in capsule cells of the developing kidney (By similarity). Delivery to lysosomes is mediated by the cargo receptor NCOA4 for autophagic degradation and release of iron (By similarity).</text>
</comment>
<comment type="catalytic activity">
    <reaction evidence="1">
        <text>4 Fe(2+) + O2 + 4 H(+) = 4 Fe(3+) + 2 H2O</text>
        <dbReference type="Rhea" id="RHEA:11148"/>
        <dbReference type="ChEBI" id="CHEBI:15377"/>
        <dbReference type="ChEBI" id="CHEBI:15378"/>
        <dbReference type="ChEBI" id="CHEBI:15379"/>
        <dbReference type="ChEBI" id="CHEBI:29033"/>
        <dbReference type="ChEBI" id="CHEBI:29034"/>
        <dbReference type="EC" id="1.16.3.1"/>
    </reaction>
</comment>
<comment type="subunit">
    <text evidence="1 2">Oligomer of 24 subunits. There are two types of subunits: L (light) chain and H (heavy) chain. The major chain can be light or heavy, depending on the species and tissue type. The functional molecule forms a roughly spherical shell with a diameter of 12 nm and contains a central cavity into which the insoluble mineral iron core is deposited. Interacts with NCOA4; NCOA4 promotes targeting of the iron-binding ferritin complex to autolysosomes following starvation or iron depletion (By similarity).</text>
</comment>
<comment type="subcellular location">
    <subcellularLocation>
        <location evidence="3">Cytoplasm</location>
    </subcellularLocation>
    <subcellularLocation>
        <location evidence="1">Lysosome</location>
    </subcellularLocation>
    <subcellularLocation>
        <location evidence="1">Cytoplasmic vesicle</location>
        <location evidence="1">Autophagosome</location>
    </subcellularLocation>
</comment>
<comment type="similarity">
    <text evidence="5">Belongs to the ferritin family.</text>
</comment>